<keyword id="KW-0067">ATP-binding</keyword>
<keyword id="KW-0547">Nucleotide-binding</keyword>
<keyword id="KW-0548">Nucleotidyltransferase</keyword>
<keyword id="KW-0614">Plasmid</keyword>
<keyword id="KW-1185">Reference proteome</keyword>
<keyword id="KW-0808">Transferase</keyword>
<proteinExistence type="inferred from homology"/>
<reference key="1">
    <citation type="journal article" date="1998" name="Nature">
        <title>The complete genome of the hyperthermophilic bacterium Aquifex aeolicus.</title>
        <authorList>
            <person name="Deckert G."/>
            <person name="Warren P.V."/>
            <person name="Gaasterland T."/>
            <person name="Young W.G."/>
            <person name="Lenox A.L."/>
            <person name="Graham D.E."/>
            <person name="Overbeek R."/>
            <person name="Snead M.A."/>
            <person name="Keller M."/>
            <person name="Aujay M."/>
            <person name="Huber R."/>
            <person name="Feldman R.A."/>
            <person name="Short J.M."/>
            <person name="Olsen G.J."/>
            <person name="Swanson R.V."/>
        </authorList>
    </citation>
    <scope>NUCLEOTIDE SEQUENCE [LARGE SCALE GENOMIC DNA]</scope>
    <source>
        <strain>VF5</strain>
    </source>
</reference>
<accession>O66426</accession>
<geneLocation type="plasmid">
    <name>ece1</name>
</geneLocation>
<name>YZ38_AQUAE</name>
<gene>
    <name type="ordered locus">aq_aa38</name>
</gene>
<dbReference type="EC" id="2.7.7.108"/>
<dbReference type="EMBL" id="AE000667">
    <property type="protein sequence ID" value="AAC07978.1"/>
    <property type="molecule type" value="Genomic_DNA"/>
</dbReference>
<dbReference type="RefSeq" id="NP_046426.1">
    <property type="nucleotide sequence ID" value="NC_001880.1"/>
</dbReference>
<dbReference type="RefSeq" id="WP_010890572.1">
    <property type="nucleotide sequence ID" value="NC_001880.1"/>
</dbReference>
<dbReference type="SMR" id="O66426"/>
<dbReference type="EnsemblBacteria" id="AAC07978">
    <property type="protein sequence ID" value="AAC07978"/>
    <property type="gene ID" value="aq_aa38"/>
</dbReference>
<dbReference type="KEGG" id="aae:aq_aa38"/>
<dbReference type="eggNOG" id="COG3177">
    <property type="taxonomic scope" value="Bacteria"/>
</dbReference>
<dbReference type="HOGENOM" id="CLU_064957_0_0_0"/>
<dbReference type="InParanoid" id="O66426"/>
<dbReference type="OrthoDB" id="9813719at2"/>
<dbReference type="Proteomes" id="UP000000798">
    <property type="component" value="Plasmid ece1"/>
</dbReference>
<dbReference type="GO" id="GO:0070733">
    <property type="term" value="F:AMPylase activity"/>
    <property type="evidence" value="ECO:0007669"/>
    <property type="project" value="RHEA"/>
</dbReference>
<dbReference type="GO" id="GO:0005524">
    <property type="term" value="F:ATP binding"/>
    <property type="evidence" value="ECO:0007669"/>
    <property type="project" value="UniProtKB-KW"/>
</dbReference>
<dbReference type="GO" id="GO:0003677">
    <property type="term" value="F:DNA binding"/>
    <property type="evidence" value="ECO:0007669"/>
    <property type="project" value="InterPro"/>
</dbReference>
<dbReference type="Gene3D" id="1.10.3290.10">
    <property type="entry name" value="Fido-like domain"/>
    <property type="match status" value="1"/>
</dbReference>
<dbReference type="InterPro" id="IPR003812">
    <property type="entry name" value="Fido"/>
</dbReference>
<dbReference type="InterPro" id="IPR036597">
    <property type="entry name" value="Fido-like_dom_sf"/>
</dbReference>
<dbReference type="InterPro" id="IPR040198">
    <property type="entry name" value="Fido_containing"/>
</dbReference>
<dbReference type="InterPro" id="IPR041657">
    <property type="entry name" value="HTH_17"/>
</dbReference>
<dbReference type="InterPro" id="IPR010093">
    <property type="entry name" value="SinI_DNA-bd"/>
</dbReference>
<dbReference type="NCBIfam" id="TIGR01764">
    <property type="entry name" value="excise"/>
    <property type="match status" value="1"/>
</dbReference>
<dbReference type="PANTHER" id="PTHR13504:SF38">
    <property type="entry name" value="FIDO DOMAIN-CONTAINING PROTEIN"/>
    <property type="match status" value="1"/>
</dbReference>
<dbReference type="PANTHER" id="PTHR13504">
    <property type="entry name" value="FIDO DOMAIN-CONTAINING PROTEIN DDB_G0283145"/>
    <property type="match status" value="1"/>
</dbReference>
<dbReference type="Pfam" id="PF02661">
    <property type="entry name" value="Fic"/>
    <property type="match status" value="1"/>
</dbReference>
<dbReference type="Pfam" id="PF12728">
    <property type="entry name" value="HTH_17"/>
    <property type="match status" value="1"/>
</dbReference>
<dbReference type="SUPFAM" id="SSF140931">
    <property type="entry name" value="Fic-like"/>
    <property type="match status" value="1"/>
</dbReference>
<dbReference type="PROSITE" id="PS51459">
    <property type="entry name" value="FIDO"/>
    <property type="match status" value="1"/>
</dbReference>
<sequence length="320" mass="37061">MTYQNGVEVLLEEFLDYLTKEETICSLEIEKLKVSIDELEKETDEPRVLQGINYFRTAKEVYQLSRKAYETKEEVVSEALILWIYENLWKGFNVPKGYRKSDMVIFGAKFSPPPPYVVPNLIRTIVNWLRNEKTIDVVKKSIIFHTLFEVIHPFPDGNGRVGRILLNAILVENGLLNVAFRNREKYISALREAEEGAIVVVEKLSRGRKIDYSSITETVEYYGNLNVFDELIRTEMMHSLKVYSNIKQVFLTPEEAAKLLGLKNKDYVRVLIHRGKLKAVKEEGKWKIPLSEVVKNFEHKLKGEEFKLANNLFKGKLSPS</sequence>
<comment type="function">
    <text evidence="1">Probable adenylyltransferase that mediates the addition of adenosine 5'-monophosphate (AMP) to specific residues of target proteins.</text>
</comment>
<comment type="catalytic activity">
    <reaction>
        <text>L-tyrosyl-[protein] + ATP = O-(5'-adenylyl)-L-tyrosyl-[protein] + diphosphate</text>
        <dbReference type="Rhea" id="RHEA:54288"/>
        <dbReference type="Rhea" id="RHEA-COMP:10136"/>
        <dbReference type="Rhea" id="RHEA-COMP:13846"/>
        <dbReference type="ChEBI" id="CHEBI:30616"/>
        <dbReference type="ChEBI" id="CHEBI:33019"/>
        <dbReference type="ChEBI" id="CHEBI:46858"/>
        <dbReference type="ChEBI" id="CHEBI:83624"/>
        <dbReference type="EC" id="2.7.7.108"/>
    </reaction>
</comment>
<comment type="catalytic activity">
    <reaction>
        <text>L-threonyl-[protein] + ATP = 3-O-(5'-adenylyl)-L-threonyl-[protein] + diphosphate</text>
        <dbReference type="Rhea" id="RHEA:54292"/>
        <dbReference type="Rhea" id="RHEA-COMP:11060"/>
        <dbReference type="Rhea" id="RHEA-COMP:13847"/>
        <dbReference type="ChEBI" id="CHEBI:30013"/>
        <dbReference type="ChEBI" id="CHEBI:30616"/>
        <dbReference type="ChEBI" id="CHEBI:33019"/>
        <dbReference type="ChEBI" id="CHEBI:138113"/>
        <dbReference type="EC" id="2.7.7.108"/>
    </reaction>
</comment>
<comment type="similarity">
    <text evidence="3">Belongs to the fic family.</text>
</comment>
<feature type="chain" id="PRO_0000187004" description="Probable protein adenylyltransferase aq_aa38">
    <location>
        <begin position="1"/>
        <end position="320"/>
    </location>
</feature>
<feature type="domain" description="Fido" evidence="2">
    <location>
        <begin position="76"/>
        <end position="206"/>
    </location>
</feature>
<feature type="binding site" evidence="1">
    <location>
        <begin position="100"/>
        <end position="101"/>
    </location>
    <ligand>
        <name>ATP</name>
        <dbReference type="ChEBI" id="CHEBI:30616"/>
    </ligand>
</feature>
<feature type="binding site" evidence="1">
    <location>
        <begin position="157"/>
        <end position="159"/>
    </location>
    <ligand>
        <name>ATP</name>
        <dbReference type="ChEBI" id="CHEBI:30616"/>
    </ligand>
</feature>
<feature type="binding site" evidence="1">
    <location>
        <position position="163"/>
    </location>
    <ligand>
        <name>ATP</name>
        <dbReference type="ChEBI" id="CHEBI:30616"/>
    </ligand>
</feature>
<protein>
    <recommendedName>
        <fullName>Probable protein adenylyltransferase aq_aa38</fullName>
        <ecNumber>2.7.7.108</ecNumber>
    </recommendedName>
</protein>
<organism>
    <name type="scientific">Aquifex aeolicus (strain VF5)</name>
    <dbReference type="NCBI Taxonomy" id="224324"/>
    <lineage>
        <taxon>Bacteria</taxon>
        <taxon>Pseudomonadati</taxon>
        <taxon>Aquificota</taxon>
        <taxon>Aquificia</taxon>
        <taxon>Aquificales</taxon>
        <taxon>Aquificaceae</taxon>
        <taxon>Aquifex</taxon>
    </lineage>
</organism>
<evidence type="ECO:0000250" key="1"/>
<evidence type="ECO:0000255" key="2">
    <source>
        <dbReference type="PROSITE-ProRule" id="PRU00791"/>
    </source>
</evidence>
<evidence type="ECO:0000305" key="3"/>